<name>MS84D_DROME</name>
<dbReference type="EMBL" id="X67703">
    <property type="protein sequence ID" value="CAA47940.1"/>
    <property type="molecule type" value="Genomic_DNA"/>
</dbReference>
<dbReference type="EMBL" id="AE014297">
    <property type="protein sequence ID" value="AAF54026.1"/>
    <property type="molecule type" value="Genomic_DNA"/>
</dbReference>
<dbReference type="EMBL" id="BT023344">
    <property type="protein sequence ID" value="AAY55760.1"/>
    <property type="molecule type" value="mRNA"/>
</dbReference>
<dbReference type="EMBL" id="BT029401">
    <property type="protein sequence ID" value="ABK57058.1"/>
    <property type="status" value="ALT_INIT"/>
    <property type="molecule type" value="mRNA"/>
</dbReference>
<dbReference type="PIR" id="S25775">
    <property type="entry name" value="S25775"/>
</dbReference>
<dbReference type="RefSeq" id="NP_524253.1">
    <property type="nucleotide sequence ID" value="NM_079529.3"/>
</dbReference>
<dbReference type="BioGRID" id="66077">
    <property type="interactions" value="10"/>
</dbReference>
<dbReference type="IntAct" id="Q01645">
    <property type="interactions" value="8"/>
</dbReference>
<dbReference type="STRING" id="7227.FBpp0081107"/>
<dbReference type="PaxDb" id="7227-FBpp0081107"/>
<dbReference type="DNASU" id="40886"/>
<dbReference type="EnsemblMetazoa" id="FBtr0081588">
    <property type="protein sequence ID" value="FBpp0081107"/>
    <property type="gene ID" value="FBgn0004175"/>
</dbReference>
<dbReference type="GeneID" id="40886"/>
<dbReference type="KEGG" id="dme:Dmel_CG17935"/>
<dbReference type="AGR" id="FB:FBgn0004175"/>
<dbReference type="CTD" id="40886"/>
<dbReference type="FlyBase" id="FBgn0004175">
    <property type="gene designation" value="Mst84Dd"/>
</dbReference>
<dbReference type="VEuPathDB" id="VectorBase:FBgn0004175"/>
<dbReference type="HOGENOM" id="CLU_2724855_0_0_1"/>
<dbReference type="InParanoid" id="Q01645"/>
<dbReference type="OMA" id="CRPCCCT"/>
<dbReference type="SignaLink" id="Q01645"/>
<dbReference type="BioGRID-ORCS" id="40886">
    <property type="hits" value="0 hits in 1 CRISPR screen"/>
</dbReference>
<dbReference type="GenomeRNAi" id="40886"/>
<dbReference type="PRO" id="PR:Q01645"/>
<dbReference type="Proteomes" id="UP000000803">
    <property type="component" value="Chromosome 3R"/>
</dbReference>
<dbReference type="Bgee" id="FBgn0004175">
    <property type="expression patterns" value="Expressed in early elongation stage spermatid (Drosophila) in testis and 43 other cell types or tissues"/>
</dbReference>
<dbReference type="ExpressionAtlas" id="Q01645">
    <property type="expression patterns" value="baseline and differential"/>
</dbReference>
<dbReference type="GO" id="GO:0007288">
    <property type="term" value="P:sperm axoneme assembly"/>
    <property type="evidence" value="ECO:0000316"/>
    <property type="project" value="FlyBase"/>
</dbReference>
<dbReference type="GO" id="GO:0007283">
    <property type="term" value="P:spermatogenesis"/>
    <property type="evidence" value="ECO:0000316"/>
    <property type="project" value="FlyBase"/>
</dbReference>
<dbReference type="InterPro" id="IPR005634">
    <property type="entry name" value="MSSP"/>
</dbReference>
<dbReference type="Pfam" id="PF03940">
    <property type="entry name" value="MSSP"/>
    <property type="match status" value="1"/>
</dbReference>
<evidence type="ECO:0000269" key="1">
    <source>
    </source>
</evidence>
<evidence type="ECO:0000305" key="2"/>
<feature type="chain" id="PRO_0000096586" description="Male-specific sperm protein Mst84Dd">
    <location>
        <begin position="1"/>
        <end position="72"/>
    </location>
</feature>
<feature type="sequence conflict" description="In Ref. 1." evidence="2" ref="1">
    <location>
        <begin position="13"/>
        <end position="16"/>
    </location>
</feature>
<proteinExistence type="evidence at protein level"/>
<comment type="interaction">
    <interactant intactId="EBI-201877">
        <id>Q01645</id>
    </interactant>
    <interactant intactId="EBI-15110079">
        <id>P23023-2</id>
        <label>dsx</label>
    </interactant>
    <organismsDiffer>false</organismsDiffer>
    <experiments>4</experiments>
</comment>
<comment type="tissue specificity">
    <text evidence="1">Testis.</text>
</comment>
<comment type="developmental stage">
    <text evidence="1">Primary spermatocytes.</text>
</comment>
<comment type="domain">
    <text>This protein is mostly composed of repetitive C-G-P motifs.</text>
</comment>
<comment type="similarity">
    <text evidence="2">Belongs to the MST(3)CGP family.</text>
</comment>
<comment type="sequence caution" evidence="2">
    <conflict type="erroneous initiation">
        <sequence resource="EMBL-CDS" id="ABK57058"/>
    </conflict>
</comment>
<protein>
    <recommendedName>
        <fullName>Male-specific sperm protein Mst84Dd</fullName>
    </recommendedName>
</protein>
<keyword id="KW-0217">Developmental protein</keyword>
<keyword id="KW-0221">Differentiation</keyword>
<keyword id="KW-1185">Reference proteome</keyword>
<keyword id="KW-0677">Repeat</keyword>
<keyword id="KW-0744">Spermatogenesis</keyword>
<accession>Q01645</accession>
<accession>A0JQ31</accession>
<accession>Q4V3L2</accession>
<accession>Q9VI99</accession>
<organism>
    <name type="scientific">Drosophila melanogaster</name>
    <name type="common">Fruit fly</name>
    <dbReference type="NCBI Taxonomy" id="7227"/>
    <lineage>
        <taxon>Eukaryota</taxon>
        <taxon>Metazoa</taxon>
        <taxon>Ecdysozoa</taxon>
        <taxon>Arthropoda</taxon>
        <taxon>Hexapoda</taxon>
        <taxon>Insecta</taxon>
        <taxon>Pterygota</taxon>
        <taxon>Neoptera</taxon>
        <taxon>Endopterygota</taxon>
        <taxon>Diptera</taxon>
        <taxon>Brachycera</taxon>
        <taxon>Muscomorpha</taxon>
        <taxon>Ephydroidea</taxon>
        <taxon>Drosophilidae</taxon>
        <taxon>Drosophila</taxon>
        <taxon>Sophophora</taxon>
    </lineage>
</organism>
<gene>
    <name type="primary">Mst84Dd</name>
    <name type="ORF">CG17935</name>
</gene>
<sequence length="72" mass="6840">MGCAPGGPCCGPCGPCCGPCCGPCCGPCCGPCCGPCGPCCGPCGPRCGPCGPCGPCCGTMEKRNGLQRCCPF</sequence>
<reference key="1">
    <citation type="journal article" date="1991" name="Mech. Dev.">
        <title>A cluster of four genes selectively expressed in the male germ line of Drosophila melanogaster.</title>
        <authorList>
            <person name="Kuhn R."/>
            <person name="Kuhn C."/>
            <person name="Boersch D."/>
            <person name="Glaetzer K.H."/>
            <person name="Schaefer U."/>
            <person name="Schaefer M."/>
        </authorList>
    </citation>
    <scope>NUCLEOTIDE SEQUENCE [GENOMIC DNA]</scope>
    <scope>TISSUE SPECIFICITY</scope>
    <scope>DEVELOPMENTAL STAGE</scope>
    <source>
        <strain>Oregon-R</strain>
    </source>
</reference>
<reference key="2">
    <citation type="journal article" date="2000" name="Science">
        <title>The genome sequence of Drosophila melanogaster.</title>
        <authorList>
            <person name="Adams M.D."/>
            <person name="Celniker S.E."/>
            <person name="Holt R.A."/>
            <person name="Evans C.A."/>
            <person name="Gocayne J.D."/>
            <person name="Amanatides P.G."/>
            <person name="Scherer S.E."/>
            <person name="Li P.W."/>
            <person name="Hoskins R.A."/>
            <person name="Galle R.F."/>
            <person name="George R.A."/>
            <person name="Lewis S.E."/>
            <person name="Richards S."/>
            <person name="Ashburner M."/>
            <person name="Henderson S.N."/>
            <person name="Sutton G.G."/>
            <person name="Wortman J.R."/>
            <person name="Yandell M.D."/>
            <person name="Zhang Q."/>
            <person name="Chen L.X."/>
            <person name="Brandon R.C."/>
            <person name="Rogers Y.-H.C."/>
            <person name="Blazej R.G."/>
            <person name="Champe M."/>
            <person name="Pfeiffer B.D."/>
            <person name="Wan K.H."/>
            <person name="Doyle C."/>
            <person name="Baxter E.G."/>
            <person name="Helt G."/>
            <person name="Nelson C.R."/>
            <person name="Miklos G.L.G."/>
            <person name="Abril J.F."/>
            <person name="Agbayani A."/>
            <person name="An H.-J."/>
            <person name="Andrews-Pfannkoch C."/>
            <person name="Baldwin D."/>
            <person name="Ballew R.M."/>
            <person name="Basu A."/>
            <person name="Baxendale J."/>
            <person name="Bayraktaroglu L."/>
            <person name="Beasley E.M."/>
            <person name="Beeson K.Y."/>
            <person name="Benos P.V."/>
            <person name="Berman B.P."/>
            <person name="Bhandari D."/>
            <person name="Bolshakov S."/>
            <person name="Borkova D."/>
            <person name="Botchan M.R."/>
            <person name="Bouck J."/>
            <person name="Brokstein P."/>
            <person name="Brottier P."/>
            <person name="Burtis K.C."/>
            <person name="Busam D.A."/>
            <person name="Butler H."/>
            <person name="Cadieu E."/>
            <person name="Center A."/>
            <person name="Chandra I."/>
            <person name="Cherry J.M."/>
            <person name="Cawley S."/>
            <person name="Dahlke C."/>
            <person name="Davenport L.B."/>
            <person name="Davies P."/>
            <person name="de Pablos B."/>
            <person name="Delcher A."/>
            <person name="Deng Z."/>
            <person name="Mays A.D."/>
            <person name="Dew I."/>
            <person name="Dietz S.M."/>
            <person name="Dodson K."/>
            <person name="Doup L.E."/>
            <person name="Downes M."/>
            <person name="Dugan-Rocha S."/>
            <person name="Dunkov B.C."/>
            <person name="Dunn P."/>
            <person name="Durbin K.J."/>
            <person name="Evangelista C.C."/>
            <person name="Ferraz C."/>
            <person name="Ferriera S."/>
            <person name="Fleischmann W."/>
            <person name="Fosler C."/>
            <person name="Gabrielian A.E."/>
            <person name="Garg N.S."/>
            <person name="Gelbart W.M."/>
            <person name="Glasser K."/>
            <person name="Glodek A."/>
            <person name="Gong F."/>
            <person name="Gorrell J.H."/>
            <person name="Gu Z."/>
            <person name="Guan P."/>
            <person name="Harris M."/>
            <person name="Harris N.L."/>
            <person name="Harvey D.A."/>
            <person name="Heiman T.J."/>
            <person name="Hernandez J.R."/>
            <person name="Houck J."/>
            <person name="Hostin D."/>
            <person name="Houston K.A."/>
            <person name="Howland T.J."/>
            <person name="Wei M.-H."/>
            <person name="Ibegwam C."/>
            <person name="Jalali M."/>
            <person name="Kalush F."/>
            <person name="Karpen G.H."/>
            <person name="Ke Z."/>
            <person name="Kennison J.A."/>
            <person name="Ketchum K.A."/>
            <person name="Kimmel B.E."/>
            <person name="Kodira C.D."/>
            <person name="Kraft C.L."/>
            <person name="Kravitz S."/>
            <person name="Kulp D."/>
            <person name="Lai Z."/>
            <person name="Lasko P."/>
            <person name="Lei Y."/>
            <person name="Levitsky A.A."/>
            <person name="Li J.H."/>
            <person name="Li Z."/>
            <person name="Liang Y."/>
            <person name="Lin X."/>
            <person name="Liu X."/>
            <person name="Mattei B."/>
            <person name="McIntosh T.C."/>
            <person name="McLeod M.P."/>
            <person name="McPherson D."/>
            <person name="Merkulov G."/>
            <person name="Milshina N.V."/>
            <person name="Mobarry C."/>
            <person name="Morris J."/>
            <person name="Moshrefi A."/>
            <person name="Mount S.M."/>
            <person name="Moy M."/>
            <person name="Murphy B."/>
            <person name="Murphy L."/>
            <person name="Muzny D.M."/>
            <person name="Nelson D.L."/>
            <person name="Nelson D.R."/>
            <person name="Nelson K.A."/>
            <person name="Nixon K."/>
            <person name="Nusskern D.R."/>
            <person name="Pacleb J.M."/>
            <person name="Palazzolo M."/>
            <person name="Pittman G.S."/>
            <person name="Pan S."/>
            <person name="Pollard J."/>
            <person name="Puri V."/>
            <person name="Reese M.G."/>
            <person name="Reinert K."/>
            <person name="Remington K."/>
            <person name="Saunders R.D.C."/>
            <person name="Scheeler F."/>
            <person name="Shen H."/>
            <person name="Shue B.C."/>
            <person name="Siden-Kiamos I."/>
            <person name="Simpson M."/>
            <person name="Skupski M.P."/>
            <person name="Smith T.J."/>
            <person name="Spier E."/>
            <person name="Spradling A.C."/>
            <person name="Stapleton M."/>
            <person name="Strong R."/>
            <person name="Sun E."/>
            <person name="Svirskas R."/>
            <person name="Tector C."/>
            <person name="Turner R."/>
            <person name="Venter E."/>
            <person name="Wang A.H."/>
            <person name="Wang X."/>
            <person name="Wang Z.-Y."/>
            <person name="Wassarman D.A."/>
            <person name="Weinstock G.M."/>
            <person name="Weissenbach J."/>
            <person name="Williams S.M."/>
            <person name="Woodage T."/>
            <person name="Worley K.C."/>
            <person name="Wu D."/>
            <person name="Yang S."/>
            <person name="Yao Q.A."/>
            <person name="Ye J."/>
            <person name="Yeh R.-F."/>
            <person name="Zaveri J.S."/>
            <person name="Zhan M."/>
            <person name="Zhang G."/>
            <person name="Zhao Q."/>
            <person name="Zheng L."/>
            <person name="Zheng X.H."/>
            <person name="Zhong F.N."/>
            <person name="Zhong W."/>
            <person name="Zhou X."/>
            <person name="Zhu S.C."/>
            <person name="Zhu X."/>
            <person name="Smith H.O."/>
            <person name="Gibbs R.A."/>
            <person name="Myers E.W."/>
            <person name="Rubin G.M."/>
            <person name="Venter J.C."/>
        </authorList>
    </citation>
    <scope>NUCLEOTIDE SEQUENCE [LARGE SCALE GENOMIC DNA]</scope>
    <source>
        <strain>Berkeley</strain>
    </source>
</reference>
<reference key="3">
    <citation type="journal article" date="2002" name="Genome Biol.">
        <title>Annotation of the Drosophila melanogaster euchromatic genome: a systematic review.</title>
        <authorList>
            <person name="Misra S."/>
            <person name="Crosby M.A."/>
            <person name="Mungall C.J."/>
            <person name="Matthews B.B."/>
            <person name="Campbell K.S."/>
            <person name="Hradecky P."/>
            <person name="Huang Y."/>
            <person name="Kaminker J.S."/>
            <person name="Millburn G.H."/>
            <person name="Prochnik S.E."/>
            <person name="Smith C.D."/>
            <person name="Tupy J.L."/>
            <person name="Whitfield E.J."/>
            <person name="Bayraktaroglu L."/>
            <person name="Berman B.P."/>
            <person name="Bettencourt B.R."/>
            <person name="Celniker S.E."/>
            <person name="de Grey A.D.N.J."/>
            <person name="Drysdale R.A."/>
            <person name="Harris N.L."/>
            <person name="Richter J."/>
            <person name="Russo S."/>
            <person name="Schroeder A.J."/>
            <person name="Shu S.Q."/>
            <person name="Stapleton M."/>
            <person name="Yamada C."/>
            <person name="Ashburner M."/>
            <person name="Gelbart W.M."/>
            <person name="Rubin G.M."/>
            <person name="Lewis S.E."/>
        </authorList>
    </citation>
    <scope>GENOME REANNOTATION</scope>
    <source>
        <strain>Berkeley</strain>
    </source>
</reference>
<reference key="4">
    <citation type="submission" date="2006-11" db="EMBL/GenBank/DDBJ databases">
        <authorList>
            <person name="Stapleton M."/>
            <person name="Carlson J.W."/>
            <person name="Chavez C."/>
            <person name="Frise E."/>
            <person name="George R.A."/>
            <person name="Kapadia B."/>
            <person name="Pacleb J.M."/>
            <person name="Park S."/>
            <person name="Wan K.H."/>
            <person name="Yu C."/>
            <person name="Celniker S.E."/>
        </authorList>
    </citation>
    <scope>NUCLEOTIDE SEQUENCE [LARGE SCALE MRNA]</scope>
    <source>
        <strain>Berkeley</strain>
    </source>
</reference>